<proteinExistence type="inferred from homology"/>
<evidence type="ECO:0000255" key="1">
    <source>
        <dbReference type="HAMAP-Rule" id="MF_00044"/>
    </source>
</evidence>
<sequence length="598" mass="66642">MRTEYCGQLNLSHVGQSVTLCGWVNRRRDLGGLIFIDMRDREGIVQVFFDPDHKAAFEQASELRNEFCIQITGTVRARPDSQINKDMSTGEVEIFANTLNIINRSEPLPLDSNQINSEEQRLKYRYLDLRRPEMADRLKSRAKITSFVRRFMDDHGFLDIETPMLTKATPEGARDYLVPSRVHKGKFYALPQSPQLFKQLLMMSGFDRYYQIVKCFRDEDLRADRQPEFTQIDVETSFMSADQVREVMEKLVRELWQETKGVDLGDFPVMTFAEAMRRYGSDKPDLRNPLELVDVASLVKDVEFKVFSGPANDAKGRVAALRVPGGAQLSRKQIDEYGQFVGIYGAKGLAWLKVNDRAAGLEGVQSPIAKFLSAEVLDAILVATQAESGDILFFGADSYKIVTDAMGALRLKVGRDLELTRLGTWAPLWVVDFPMFEDDSEGGLTAMHHPFTAPKDMSPEQLAAAPTTAIANAYDMVINGYEVGGGSVRIHRTEMQQTVFGILGITEDEQREKFGFLLDALKFGTPPHAGLAFGLDRLVMLLTGTDNIRDVIAFPKTTAAACLMTDAPSFANPASLQELSISVVAKKGTTDAGAEENQ</sequence>
<gene>
    <name evidence="1" type="primary">aspS</name>
    <name type="ordered locus">YPN_1530</name>
    <name type="ORF">YP516_1698</name>
</gene>
<dbReference type="EC" id="6.1.1.12" evidence="1"/>
<dbReference type="EMBL" id="CP000305">
    <property type="protein sequence ID" value="ABG17860.1"/>
    <property type="molecule type" value="Genomic_DNA"/>
</dbReference>
<dbReference type="EMBL" id="ACNQ01000009">
    <property type="protein sequence ID" value="EEO76966.1"/>
    <property type="molecule type" value="Genomic_DNA"/>
</dbReference>
<dbReference type="RefSeq" id="WP_002211204.1">
    <property type="nucleotide sequence ID" value="NZ_ACNQ01000009.1"/>
</dbReference>
<dbReference type="SMR" id="Q1CJH0"/>
<dbReference type="GeneID" id="57976608"/>
<dbReference type="KEGG" id="ypn:YPN_1530"/>
<dbReference type="HOGENOM" id="CLU_014330_3_2_6"/>
<dbReference type="Proteomes" id="UP000008936">
    <property type="component" value="Chromosome"/>
</dbReference>
<dbReference type="GO" id="GO:0005737">
    <property type="term" value="C:cytoplasm"/>
    <property type="evidence" value="ECO:0007669"/>
    <property type="project" value="UniProtKB-SubCell"/>
</dbReference>
<dbReference type="GO" id="GO:0004815">
    <property type="term" value="F:aspartate-tRNA ligase activity"/>
    <property type="evidence" value="ECO:0007669"/>
    <property type="project" value="UniProtKB-UniRule"/>
</dbReference>
<dbReference type="GO" id="GO:0005524">
    <property type="term" value="F:ATP binding"/>
    <property type="evidence" value="ECO:0007669"/>
    <property type="project" value="UniProtKB-UniRule"/>
</dbReference>
<dbReference type="GO" id="GO:0003676">
    <property type="term" value="F:nucleic acid binding"/>
    <property type="evidence" value="ECO:0007669"/>
    <property type="project" value="InterPro"/>
</dbReference>
<dbReference type="GO" id="GO:0006422">
    <property type="term" value="P:aspartyl-tRNA aminoacylation"/>
    <property type="evidence" value="ECO:0007669"/>
    <property type="project" value="UniProtKB-UniRule"/>
</dbReference>
<dbReference type="CDD" id="cd00777">
    <property type="entry name" value="AspRS_core"/>
    <property type="match status" value="1"/>
</dbReference>
<dbReference type="CDD" id="cd04317">
    <property type="entry name" value="EcAspRS_like_N"/>
    <property type="match status" value="1"/>
</dbReference>
<dbReference type="FunFam" id="2.40.50.140:FF:000080">
    <property type="entry name" value="Aspartate--tRNA ligase"/>
    <property type="match status" value="1"/>
</dbReference>
<dbReference type="Gene3D" id="3.30.930.10">
    <property type="entry name" value="Bira Bifunctional Protein, Domain 2"/>
    <property type="match status" value="1"/>
</dbReference>
<dbReference type="Gene3D" id="3.30.1360.30">
    <property type="entry name" value="GAD-like domain"/>
    <property type="match status" value="1"/>
</dbReference>
<dbReference type="Gene3D" id="2.40.50.140">
    <property type="entry name" value="Nucleic acid-binding proteins"/>
    <property type="match status" value="1"/>
</dbReference>
<dbReference type="HAMAP" id="MF_00044">
    <property type="entry name" value="Asp_tRNA_synth_type1"/>
    <property type="match status" value="1"/>
</dbReference>
<dbReference type="InterPro" id="IPR004364">
    <property type="entry name" value="Aa-tRNA-synt_II"/>
</dbReference>
<dbReference type="InterPro" id="IPR006195">
    <property type="entry name" value="aa-tRNA-synth_II"/>
</dbReference>
<dbReference type="InterPro" id="IPR045864">
    <property type="entry name" value="aa-tRNA-synth_II/BPL/LPL"/>
</dbReference>
<dbReference type="InterPro" id="IPR004524">
    <property type="entry name" value="Asp-tRNA-ligase_1"/>
</dbReference>
<dbReference type="InterPro" id="IPR047089">
    <property type="entry name" value="Asp-tRNA-ligase_1_N"/>
</dbReference>
<dbReference type="InterPro" id="IPR002312">
    <property type="entry name" value="Asp/Asn-tRNA-synth_IIb"/>
</dbReference>
<dbReference type="InterPro" id="IPR047090">
    <property type="entry name" value="AspRS_core"/>
</dbReference>
<dbReference type="InterPro" id="IPR004115">
    <property type="entry name" value="GAD-like_sf"/>
</dbReference>
<dbReference type="InterPro" id="IPR029351">
    <property type="entry name" value="GAD_dom"/>
</dbReference>
<dbReference type="InterPro" id="IPR012340">
    <property type="entry name" value="NA-bd_OB-fold"/>
</dbReference>
<dbReference type="InterPro" id="IPR004365">
    <property type="entry name" value="NA-bd_OB_tRNA"/>
</dbReference>
<dbReference type="NCBIfam" id="TIGR00459">
    <property type="entry name" value="aspS_bact"/>
    <property type="match status" value="1"/>
</dbReference>
<dbReference type="NCBIfam" id="NF001750">
    <property type="entry name" value="PRK00476.1"/>
    <property type="match status" value="1"/>
</dbReference>
<dbReference type="PANTHER" id="PTHR22594:SF5">
    <property type="entry name" value="ASPARTATE--TRNA LIGASE, MITOCHONDRIAL"/>
    <property type="match status" value="1"/>
</dbReference>
<dbReference type="PANTHER" id="PTHR22594">
    <property type="entry name" value="ASPARTYL/LYSYL-TRNA SYNTHETASE"/>
    <property type="match status" value="1"/>
</dbReference>
<dbReference type="Pfam" id="PF02938">
    <property type="entry name" value="GAD"/>
    <property type="match status" value="1"/>
</dbReference>
<dbReference type="Pfam" id="PF00152">
    <property type="entry name" value="tRNA-synt_2"/>
    <property type="match status" value="1"/>
</dbReference>
<dbReference type="Pfam" id="PF01336">
    <property type="entry name" value="tRNA_anti-codon"/>
    <property type="match status" value="1"/>
</dbReference>
<dbReference type="PRINTS" id="PR01042">
    <property type="entry name" value="TRNASYNTHASP"/>
</dbReference>
<dbReference type="SUPFAM" id="SSF55681">
    <property type="entry name" value="Class II aaRS and biotin synthetases"/>
    <property type="match status" value="1"/>
</dbReference>
<dbReference type="SUPFAM" id="SSF55261">
    <property type="entry name" value="GAD domain-like"/>
    <property type="match status" value="1"/>
</dbReference>
<dbReference type="SUPFAM" id="SSF50249">
    <property type="entry name" value="Nucleic acid-binding proteins"/>
    <property type="match status" value="1"/>
</dbReference>
<dbReference type="PROSITE" id="PS50862">
    <property type="entry name" value="AA_TRNA_LIGASE_II"/>
    <property type="match status" value="1"/>
</dbReference>
<organism>
    <name type="scientific">Yersinia pestis bv. Antiqua (strain Nepal516)</name>
    <dbReference type="NCBI Taxonomy" id="377628"/>
    <lineage>
        <taxon>Bacteria</taxon>
        <taxon>Pseudomonadati</taxon>
        <taxon>Pseudomonadota</taxon>
        <taxon>Gammaproteobacteria</taxon>
        <taxon>Enterobacterales</taxon>
        <taxon>Yersiniaceae</taxon>
        <taxon>Yersinia</taxon>
    </lineage>
</organism>
<reference key="1">
    <citation type="journal article" date="2006" name="J. Bacteriol.">
        <title>Complete genome sequence of Yersinia pestis strains Antiqua and Nepal516: evidence of gene reduction in an emerging pathogen.</title>
        <authorList>
            <person name="Chain P.S.G."/>
            <person name="Hu P."/>
            <person name="Malfatti S.A."/>
            <person name="Radnedge L."/>
            <person name="Larimer F."/>
            <person name="Vergez L.M."/>
            <person name="Worsham P."/>
            <person name="Chu M.C."/>
            <person name="Andersen G.L."/>
        </authorList>
    </citation>
    <scope>NUCLEOTIDE SEQUENCE [LARGE SCALE GENOMIC DNA]</scope>
    <source>
        <strain>Nepal516</strain>
    </source>
</reference>
<reference key="2">
    <citation type="submission" date="2009-04" db="EMBL/GenBank/DDBJ databases">
        <title>Yersinia pestis Nepal516A whole genome shotgun sequencing project.</title>
        <authorList>
            <person name="Plunkett G. III"/>
            <person name="Anderson B.D."/>
            <person name="Baumler D.J."/>
            <person name="Burland V."/>
            <person name="Cabot E.L."/>
            <person name="Glasner J.D."/>
            <person name="Mau B."/>
            <person name="Neeno-Eckwall E."/>
            <person name="Perna N.T."/>
            <person name="Munk A.C."/>
            <person name="Tapia R."/>
            <person name="Green L.D."/>
            <person name="Rogers Y.C."/>
            <person name="Detter J.C."/>
            <person name="Bruce D.C."/>
            <person name="Brettin T.S."/>
        </authorList>
    </citation>
    <scope>NUCLEOTIDE SEQUENCE [LARGE SCALE GENOMIC DNA]</scope>
    <source>
        <strain>Nepal516</strain>
    </source>
</reference>
<accession>Q1CJH0</accession>
<accession>C4GSF6</accession>
<keyword id="KW-0030">Aminoacyl-tRNA synthetase</keyword>
<keyword id="KW-0067">ATP-binding</keyword>
<keyword id="KW-0963">Cytoplasm</keyword>
<keyword id="KW-0436">Ligase</keyword>
<keyword id="KW-0547">Nucleotide-binding</keyword>
<keyword id="KW-0648">Protein biosynthesis</keyword>
<comment type="function">
    <text evidence="1">Catalyzes the attachment of L-aspartate to tRNA(Asp) in a two-step reaction: L-aspartate is first activated by ATP to form Asp-AMP and then transferred to the acceptor end of tRNA(Asp).</text>
</comment>
<comment type="catalytic activity">
    <reaction evidence="1">
        <text>tRNA(Asp) + L-aspartate + ATP = L-aspartyl-tRNA(Asp) + AMP + diphosphate</text>
        <dbReference type="Rhea" id="RHEA:19649"/>
        <dbReference type="Rhea" id="RHEA-COMP:9660"/>
        <dbReference type="Rhea" id="RHEA-COMP:9678"/>
        <dbReference type="ChEBI" id="CHEBI:29991"/>
        <dbReference type="ChEBI" id="CHEBI:30616"/>
        <dbReference type="ChEBI" id="CHEBI:33019"/>
        <dbReference type="ChEBI" id="CHEBI:78442"/>
        <dbReference type="ChEBI" id="CHEBI:78516"/>
        <dbReference type="ChEBI" id="CHEBI:456215"/>
        <dbReference type="EC" id="6.1.1.12"/>
    </reaction>
</comment>
<comment type="subunit">
    <text evidence="1">Homodimer.</text>
</comment>
<comment type="subcellular location">
    <subcellularLocation>
        <location evidence="1">Cytoplasm</location>
    </subcellularLocation>
</comment>
<comment type="similarity">
    <text evidence="1">Belongs to the class-II aminoacyl-tRNA synthetase family. Type 1 subfamily.</text>
</comment>
<name>SYD_YERPN</name>
<feature type="chain" id="PRO_1000006783" description="Aspartate--tRNA ligase">
    <location>
        <begin position="1"/>
        <end position="598"/>
    </location>
</feature>
<feature type="region of interest" description="Aspartate" evidence="1">
    <location>
        <begin position="195"/>
        <end position="198"/>
    </location>
</feature>
<feature type="binding site" evidence="1">
    <location>
        <position position="171"/>
    </location>
    <ligand>
        <name>L-aspartate</name>
        <dbReference type="ChEBI" id="CHEBI:29991"/>
    </ligand>
</feature>
<feature type="binding site" evidence="1">
    <location>
        <begin position="217"/>
        <end position="219"/>
    </location>
    <ligand>
        <name>ATP</name>
        <dbReference type="ChEBI" id="CHEBI:30616"/>
    </ligand>
</feature>
<feature type="binding site" evidence="1">
    <location>
        <position position="217"/>
    </location>
    <ligand>
        <name>L-aspartate</name>
        <dbReference type="ChEBI" id="CHEBI:29991"/>
    </ligand>
</feature>
<feature type="binding site" evidence="1">
    <location>
        <position position="226"/>
    </location>
    <ligand>
        <name>ATP</name>
        <dbReference type="ChEBI" id="CHEBI:30616"/>
    </ligand>
</feature>
<feature type="binding site" evidence="1">
    <location>
        <position position="448"/>
    </location>
    <ligand>
        <name>L-aspartate</name>
        <dbReference type="ChEBI" id="CHEBI:29991"/>
    </ligand>
</feature>
<feature type="binding site" evidence="1">
    <location>
        <position position="482"/>
    </location>
    <ligand>
        <name>ATP</name>
        <dbReference type="ChEBI" id="CHEBI:30616"/>
    </ligand>
</feature>
<feature type="binding site" evidence="1">
    <location>
        <position position="489"/>
    </location>
    <ligand>
        <name>L-aspartate</name>
        <dbReference type="ChEBI" id="CHEBI:29991"/>
    </ligand>
</feature>
<feature type="binding site" evidence="1">
    <location>
        <begin position="534"/>
        <end position="537"/>
    </location>
    <ligand>
        <name>ATP</name>
        <dbReference type="ChEBI" id="CHEBI:30616"/>
    </ligand>
</feature>
<protein>
    <recommendedName>
        <fullName evidence="1">Aspartate--tRNA ligase</fullName>
        <ecNumber evidence="1">6.1.1.12</ecNumber>
    </recommendedName>
    <alternativeName>
        <fullName evidence="1">Aspartyl-tRNA synthetase</fullName>
        <shortName evidence="1">AspRS</shortName>
    </alternativeName>
</protein>